<dbReference type="EC" id="2.1.1.192" evidence="1"/>
<dbReference type="EMBL" id="BA000036">
    <property type="protein sequence ID" value="BAB99413.1"/>
    <property type="molecule type" value="Genomic_DNA"/>
</dbReference>
<dbReference type="EMBL" id="BX927154">
    <property type="protein sequence ID" value="CAF20360.1"/>
    <property type="molecule type" value="Genomic_DNA"/>
</dbReference>
<dbReference type="RefSeq" id="NP_601225.1">
    <property type="nucleotide sequence ID" value="NC_003450.3"/>
</dbReference>
<dbReference type="RefSeq" id="WP_003861738.1">
    <property type="nucleotide sequence ID" value="NC_006958.1"/>
</dbReference>
<dbReference type="SMR" id="Q8NP06"/>
<dbReference type="STRING" id="196627.cg2214"/>
<dbReference type="DNASU" id="3345405"/>
<dbReference type="GeneID" id="1019976"/>
<dbReference type="KEGG" id="cgb:cg2214"/>
<dbReference type="KEGG" id="cgl:Cgl2020"/>
<dbReference type="PATRIC" id="fig|196627.13.peg.1958"/>
<dbReference type="eggNOG" id="COG0820">
    <property type="taxonomic scope" value="Bacteria"/>
</dbReference>
<dbReference type="HOGENOM" id="CLU_029101_0_2_11"/>
<dbReference type="OrthoDB" id="9793973at2"/>
<dbReference type="BioCyc" id="CORYNE:G18NG-11612-MONOMER"/>
<dbReference type="Proteomes" id="UP000000582">
    <property type="component" value="Chromosome"/>
</dbReference>
<dbReference type="Proteomes" id="UP000001009">
    <property type="component" value="Chromosome"/>
</dbReference>
<dbReference type="GO" id="GO:0005737">
    <property type="term" value="C:cytoplasm"/>
    <property type="evidence" value="ECO:0007669"/>
    <property type="project" value="UniProtKB-SubCell"/>
</dbReference>
<dbReference type="GO" id="GO:0051539">
    <property type="term" value="F:4 iron, 4 sulfur cluster binding"/>
    <property type="evidence" value="ECO:0007669"/>
    <property type="project" value="UniProtKB-UniRule"/>
</dbReference>
<dbReference type="GO" id="GO:0046872">
    <property type="term" value="F:metal ion binding"/>
    <property type="evidence" value="ECO:0007669"/>
    <property type="project" value="UniProtKB-KW"/>
</dbReference>
<dbReference type="GO" id="GO:0070040">
    <property type="term" value="F:rRNA (adenine(2503)-C2-)-methyltransferase activity"/>
    <property type="evidence" value="ECO:0007669"/>
    <property type="project" value="UniProtKB-UniRule"/>
</dbReference>
<dbReference type="GO" id="GO:0019843">
    <property type="term" value="F:rRNA binding"/>
    <property type="evidence" value="ECO:0007669"/>
    <property type="project" value="UniProtKB-UniRule"/>
</dbReference>
<dbReference type="GO" id="GO:0002935">
    <property type="term" value="F:tRNA (adenine(37)-C2)-methyltransferase activity"/>
    <property type="evidence" value="ECO:0007669"/>
    <property type="project" value="UniProtKB-UniRule"/>
</dbReference>
<dbReference type="GO" id="GO:0000049">
    <property type="term" value="F:tRNA binding"/>
    <property type="evidence" value="ECO:0007669"/>
    <property type="project" value="UniProtKB-UniRule"/>
</dbReference>
<dbReference type="GO" id="GO:0070475">
    <property type="term" value="P:rRNA base methylation"/>
    <property type="evidence" value="ECO:0007669"/>
    <property type="project" value="UniProtKB-UniRule"/>
</dbReference>
<dbReference type="GO" id="GO:0030488">
    <property type="term" value="P:tRNA methylation"/>
    <property type="evidence" value="ECO:0007669"/>
    <property type="project" value="UniProtKB-UniRule"/>
</dbReference>
<dbReference type="CDD" id="cd01335">
    <property type="entry name" value="Radical_SAM"/>
    <property type="match status" value="1"/>
</dbReference>
<dbReference type="FunFam" id="3.20.20.70:FF:000014">
    <property type="entry name" value="Probable dual-specificity RNA methyltransferase RlmN"/>
    <property type="match status" value="1"/>
</dbReference>
<dbReference type="Gene3D" id="1.10.150.530">
    <property type="match status" value="1"/>
</dbReference>
<dbReference type="Gene3D" id="3.20.20.70">
    <property type="entry name" value="Aldolase class I"/>
    <property type="match status" value="1"/>
</dbReference>
<dbReference type="HAMAP" id="MF_01849">
    <property type="entry name" value="RNA_methyltr_RlmN"/>
    <property type="match status" value="1"/>
</dbReference>
<dbReference type="InterPro" id="IPR013785">
    <property type="entry name" value="Aldolase_TIM"/>
</dbReference>
<dbReference type="InterPro" id="IPR006638">
    <property type="entry name" value="Elp3/MiaA/NifB-like_rSAM"/>
</dbReference>
<dbReference type="InterPro" id="IPR040072">
    <property type="entry name" value="Methyltransferase_A"/>
</dbReference>
<dbReference type="InterPro" id="IPR027492">
    <property type="entry name" value="RNA_MTrfase_RlmN"/>
</dbReference>
<dbReference type="InterPro" id="IPR004383">
    <property type="entry name" value="rRNA_lsu_MTrfase_RlmN/Cfr"/>
</dbReference>
<dbReference type="InterPro" id="IPR007197">
    <property type="entry name" value="rSAM"/>
</dbReference>
<dbReference type="NCBIfam" id="TIGR00048">
    <property type="entry name" value="rRNA_mod_RlmN"/>
    <property type="match status" value="1"/>
</dbReference>
<dbReference type="PANTHER" id="PTHR30544">
    <property type="entry name" value="23S RRNA METHYLTRANSFERASE"/>
    <property type="match status" value="1"/>
</dbReference>
<dbReference type="PANTHER" id="PTHR30544:SF5">
    <property type="entry name" value="RADICAL SAM CORE DOMAIN-CONTAINING PROTEIN"/>
    <property type="match status" value="1"/>
</dbReference>
<dbReference type="Pfam" id="PF04055">
    <property type="entry name" value="Radical_SAM"/>
    <property type="match status" value="1"/>
</dbReference>
<dbReference type="PIRSF" id="PIRSF006004">
    <property type="entry name" value="CHP00048"/>
    <property type="match status" value="1"/>
</dbReference>
<dbReference type="SFLD" id="SFLDF00275">
    <property type="entry name" value="adenosine_C2_methyltransferase"/>
    <property type="match status" value="1"/>
</dbReference>
<dbReference type="SFLD" id="SFLDG01062">
    <property type="entry name" value="methyltransferase_(Class_A)"/>
    <property type="match status" value="1"/>
</dbReference>
<dbReference type="SMART" id="SM00729">
    <property type="entry name" value="Elp3"/>
    <property type="match status" value="1"/>
</dbReference>
<dbReference type="SUPFAM" id="SSF102114">
    <property type="entry name" value="Radical SAM enzymes"/>
    <property type="match status" value="1"/>
</dbReference>
<dbReference type="PROSITE" id="PS51918">
    <property type="entry name" value="RADICAL_SAM"/>
    <property type="match status" value="1"/>
</dbReference>
<gene>
    <name evidence="1" type="primary">rlmN</name>
    <name type="ordered locus">Cgl2020</name>
    <name type="ordered locus">cg2214</name>
</gene>
<protein>
    <recommendedName>
        <fullName evidence="1">Probable dual-specificity RNA methyltransferase RlmN</fullName>
        <ecNumber evidence="1">2.1.1.192</ecNumber>
    </recommendedName>
    <alternativeName>
        <fullName evidence="1">23S rRNA (adenine(2503)-C(2))-methyltransferase</fullName>
    </alternativeName>
    <alternativeName>
        <fullName evidence="1">23S rRNA m2A2503 methyltransferase</fullName>
    </alternativeName>
    <alternativeName>
        <fullName evidence="1">Ribosomal RNA large subunit methyltransferase N</fullName>
    </alternativeName>
    <alternativeName>
        <fullName evidence="1">tRNA (adenine(37)-C(2))-methyltransferase</fullName>
    </alternativeName>
    <alternativeName>
        <fullName evidence="1">tRNA m2A37 methyltransferase</fullName>
    </alternativeName>
</protein>
<sequence>MATPVPLVFNAPKRGMPPTHFADLNDEARIEALKELGLPKFRLNQIARHYYGRLEADPLTMTDLPEGARQEVKDALFPTLMSPLRVVETDDDTTQKTLWKLHDGTLLESVLMRYSDRSTLCISSQAGCGMACPFCATGQGGLDRNLSIGEIVDQVRNAAATMQSEGGRLSNIVFMGMGEPLANYKRVVSAVRQITQPSPAGFGISQRSVTVSTVGLAPAIRKLADEEMSVTLAVSLHTPDDELRDTLVPVNNRWPVAEVLDAARYYADKSGRRVSIEYALIRDVNDQDWRADMLGEKLHKALGSRVHVNLIPLNPTPGSKWDAAPKARQDEFVRRVIAKGVPCTVRDTKGQEIAAACGQLAAEESA</sequence>
<comment type="function">
    <text evidence="1">Specifically methylates position 2 of adenine 2503 in 23S rRNA and position 2 of adenine 37 in tRNAs.</text>
</comment>
<comment type="catalytic activity">
    <reaction evidence="1">
        <text>adenosine(2503) in 23S rRNA + 2 reduced [2Fe-2S]-[ferredoxin] + 2 S-adenosyl-L-methionine = 2-methyladenosine(2503) in 23S rRNA + 5'-deoxyadenosine + L-methionine + 2 oxidized [2Fe-2S]-[ferredoxin] + S-adenosyl-L-homocysteine</text>
        <dbReference type="Rhea" id="RHEA:42916"/>
        <dbReference type="Rhea" id="RHEA-COMP:10000"/>
        <dbReference type="Rhea" id="RHEA-COMP:10001"/>
        <dbReference type="Rhea" id="RHEA-COMP:10152"/>
        <dbReference type="Rhea" id="RHEA-COMP:10282"/>
        <dbReference type="ChEBI" id="CHEBI:17319"/>
        <dbReference type="ChEBI" id="CHEBI:33737"/>
        <dbReference type="ChEBI" id="CHEBI:33738"/>
        <dbReference type="ChEBI" id="CHEBI:57844"/>
        <dbReference type="ChEBI" id="CHEBI:57856"/>
        <dbReference type="ChEBI" id="CHEBI:59789"/>
        <dbReference type="ChEBI" id="CHEBI:74411"/>
        <dbReference type="ChEBI" id="CHEBI:74497"/>
        <dbReference type="EC" id="2.1.1.192"/>
    </reaction>
</comment>
<comment type="catalytic activity">
    <reaction evidence="1">
        <text>adenosine(37) in tRNA + 2 reduced [2Fe-2S]-[ferredoxin] + 2 S-adenosyl-L-methionine = 2-methyladenosine(37) in tRNA + 5'-deoxyadenosine + L-methionine + 2 oxidized [2Fe-2S]-[ferredoxin] + S-adenosyl-L-homocysteine</text>
        <dbReference type="Rhea" id="RHEA:43332"/>
        <dbReference type="Rhea" id="RHEA-COMP:10000"/>
        <dbReference type="Rhea" id="RHEA-COMP:10001"/>
        <dbReference type="Rhea" id="RHEA-COMP:10162"/>
        <dbReference type="Rhea" id="RHEA-COMP:10485"/>
        <dbReference type="ChEBI" id="CHEBI:17319"/>
        <dbReference type="ChEBI" id="CHEBI:33737"/>
        <dbReference type="ChEBI" id="CHEBI:33738"/>
        <dbReference type="ChEBI" id="CHEBI:57844"/>
        <dbReference type="ChEBI" id="CHEBI:57856"/>
        <dbReference type="ChEBI" id="CHEBI:59789"/>
        <dbReference type="ChEBI" id="CHEBI:74411"/>
        <dbReference type="ChEBI" id="CHEBI:74497"/>
        <dbReference type="EC" id="2.1.1.192"/>
    </reaction>
</comment>
<comment type="cofactor">
    <cofactor evidence="1">
        <name>[4Fe-4S] cluster</name>
        <dbReference type="ChEBI" id="CHEBI:49883"/>
    </cofactor>
    <text evidence="1">Binds 1 [4Fe-4S] cluster. The cluster is coordinated with 3 cysteines and an exchangeable S-adenosyl-L-methionine.</text>
</comment>
<comment type="subcellular location">
    <subcellularLocation>
        <location evidence="1">Cytoplasm</location>
    </subcellularLocation>
</comment>
<comment type="miscellaneous">
    <text evidence="1">Reaction proceeds by a ping-pong mechanism involving intermediate methylation of a conserved cysteine residue.</text>
</comment>
<comment type="similarity">
    <text evidence="1">Belongs to the radical SAM superfamily. RlmN family.</text>
</comment>
<proteinExistence type="inferred from homology"/>
<reference key="1">
    <citation type="journal article" date="2003" name="Appl. Microbiol. Biotechnol.">
        <title>The Corynebacterium glutamicum genome: features and impacts on biotechnological processes.</title>
        <authorList>
            <person name="Ikeda M."/>
            <person name="Nakagawa S."/>
        </authorList>
    </citation>
    <scope>NUCLEOTIDE SEQUENCE [LARGE SCALE GENOMIC DNA]</scope>
    <source>
        <strain>ATCC 13032 / DSM 20300 / JCM 1318 / BCRC 11384 / CCUG 27702 / LMG 3730 / NBRC 12168 / NCIMB 10025 / NRRL B-2784 / 534</strain>
    </source>
</reference>
<reference key="2">
    <citation type="journal article" date="2003" name="J. Biotechnol.">
        <title>The complete Corynebacterium glutamicum ATCC 13032 genome sequence and its impact on the production of L-aspartate-derived amino acids and vitamins.</title>
        <authorList>
            <person name="Kalinowski J."/>
            <person name="Bathe B."/>
            <person name="Bartels D."/>
            <person name="Bischoff N."/>
            <person name="Bott M."/>
            <person name="Burkovski A."/>
            <person name="Dusch N."/>
            <person name="Eggeling L."/>
            <person name="Eikmanns B.J."/>
            <person name="Gaigalat L."/>
            <person name="Goesmann A."/>
            <person name="Hartmann M."/>
            <person name="Huthmacher K."/>
            <person name="Kraemer R."/>
            <person name="Linke B."/>
            <person name="McHardy A.C."/>
            <person name="Meyer F."/>
            <person name="Moeckel B."/>
            <person name="Pfefferle W."/>
            <person name="Puehler A."/>
            <person name="Rey D.A."/>
            <person name="Rueckert C."/>
            <person name="Rupp O."/>
            <person name="Sahm H."/>
            <person name="Wendisch V.F."/>
            <person name="Wiegraebe I."/>
            <person name="Tauch A."/>
        </authorList>
    </citation>
    <scope>NUCLEOTIDE SEQUENCE [LARGE SCALE GENOMIC DNA]</scope>
    <source>
        <strain>ATCC 13032 / DSM 20300 / JCM 1318 / BCRC 11384 / CCUG 27702 / LMG 3730 / NBRC 12168 / NCIMB 10025 / NRRL B-2784 / 534</strain>
    </source>
</reference>
<name>RLMN_CORGL</name>
<accession>Q8NP06</accession>
<accession>Q6M427</accession>
<evidence type="ECO:0000255" key="1">
    <source>
        <dbReference type="HAMAP-Rule" id="MF_01849"/>
    </source>
</evidence>
<evidence type="ECO:0000255" key="2">
    <source>
        <dbReference type="PROSITE-ProRule" id="PRU01266"/>
    </source>
</evidence>
<keyword id="KW-0004">4Fe-4S</keyword>
<keyword id="KW-0963">Cytoplasm</keyword>
<keyword id="KW-1015">Disulfide bond</keyword>
<keyword id="KW-0408">Iron</keyword>
<keyword id="KW-0411">Iron-sulfur</keyword>
<keyword id="KW-0479">Metal-binding</keyword>
<keyword id="KW-0489">Methyltransferase</keyword>
<keyword id="KW-1185">Reference proteome</keyword>
<keyword id="KW-0698">rRNA processing</keyword>
<keyword id="KW-0949">S-adenosyl-L-methionine</keyword>
<keyword id="KW-0808">Transferase</keyword>
<keyword id="KW-0819">tRNA processing</keyword>
<feature type="chain" id="PRO_0000350136" description="Probable dual-specificity RNA methyltransferase RlmN">
    <location>
        <begin position="1"/>
        <end position="366"/>
    </location>
</feature>
<feature type="domain" description="Radical SAM core" evidence="2">
    <location>
        <begin position="114"/>
        <end position="352"/>
    </location>
</feature>
<feature type="active site" description="Proton acceptor" evidence="1">
    <location>
        <position position="108"/>
    </location>
</feature>
<feature type="active site" description="S-methylcysteine intermediate" evidence="1">
    <location>
        <position position="357"/>
    </location>
</feature>
<feature type="binding site" evidence="1">
    <location>
        <position position="128"/>
    </location>
    <ligand>
        <name>[4Fe-4S] cluster</name>
        <dbReference type="ChEBI" id="CHEBI:49883"/>
        <note>4Fe-4S-S-AdoMet</note>
    </ligand>
</feature>
<feature type="binding site" evidence="1">
    <location>
        <position position="132"/>
    </location>
    <ligand>
        <name>[4Fe-4S] cluster</name>
        <dbReference type="ChEBI" id="CHEBI:49883"/>
        <note>4Fe-4S-S-AdoMet</note>
    </ligand>
</feature>
<feature type="binding site" evidence="1">
    <location>
        <position position="135"/>
    </location>
    <ligand>
        <name>[4Fe-4S] cluster</name>
        <dbReference type="ChEBI" id="CHEBI:49883"/>
        <note>4Fe-4S-S-AdoMet</note>
    </ligand>
</feature>
<feature type="binding site" evidence="1">
    <location>
        <begin position="178"/>
        <end position="179"/>
    </location>
    <ligand>
        <name>S-adenosyl-L-methionine</name>
        <dbReference type="ChEBI" id="CHEBI:59789"/>
    </ligand>
</feature>
<feature type="binding site" evidence="1">
    <location>
        <position position="212"/>
    </location>
    <ligand>
        <name>S-adenosyl-L-methionine</name>
        <dbReference type="ChEBI" id="CHEBI:59789"/>
    </ligand>
</feature>
<feature type="binding site" evidence="1">
    <location>
        <begin position="235"/>
        <end position="237"/>
    </location>
    <ligand>
        <name>S-adenosyl-L-methionine</name>
        <dbReference type="ChEBI" id="CHEBI:59789"/>
    </ligand>
</feature>
<feature type="binding site" evidence="1">
    <location>
        <position position="314"/>
    </location>
    <ligand>
        <name>S-adenosyl-L-methionine</name>
        <dbReference type="ChEBI" id="CHEBI:59789"/>
    </ligand>
</feature>
<feature type="disulfide bond" description="(transient)" evidence="1">
    <location>
        <begin position="121"/>
        <end position="357"/>
    </location>
</feature>
<organism>
    <name type="scientific">Corynebacterium glutamicum (strain ATCC 13032 / DSM 20300 / JCM 1318 / BCRC 11384 / CCUG 27702 / LMG 3730 / NBRC 12168 / NCIMB 10025 / NRRL B-2784 / 534)</name>
    <dbReference type="NCBI Taxonomy" id="196627"/>
    <lineage>
        <taxon>Bacteria</taxon>
        <taxon>Bacillati</taxon>
        <taxon>Actinomycetota</taxon>
        <taxon>Actinomycetes</taxon>
        <taxon>Mycobacteriales</taxon>
        <taxon>Corynebacteriaceae</taxon>
        <taxon>Corynebacterium</taxon>
    </lineage>
</organism>